<proteinExistence type="inferred from homology"/>
<name>AATC_ARCFU</name>
<accession>O29103</accession>
<protein>
    <recommendedName>
        <fullName evidence="1">A-type ATP synthase subunit C</fullName>
    </recommendedName>
</protein>
<sequence length="342" mass="40098">MITMIYKGNRAAWAYIVARTKVMKSRLLKPEDFRKLLNMEFDEIVRYIGETEYKKEIDELGYKFTGPRLLDHALYANLARTYRKLIEVSFGASKFLIMKYLEKWDVWNIINIIRGKMANVQPEVVDDILVPAGERDMDFWKTLLVKDIEEIVKSFEGTPYYEPLSKIGSEDMSKIEDGLYKVYYRELLKLNPSDFAMKLFLDFIKMEIDIRNVKTLLRLKAEDATPDEIMECTIPGGYELTEEELRKLAAMPIDEMIKALEGYWFWNDVQIEGKEVAAVEIEFDKVWIKTISKRASNYPLSILPVLQYIVLKKVEVDNLRVLGWGKYYGLPSEEIERQMVIL</sequence>
<organism>
    <name type="scientific">Archaeoglobus fulgidus (strain ATCC 49558 / DSM 4304 / JCM 9628 / NBRC 100126 / VC-16)</name>
    <dbReference type="NCBI Taxonomy" id="224325"/>
    <lineage>
        <taxon>Archaea</taxon>
        <taxon>Methanobacteriati</taxon>
        <taxon>Methanobacteriota</taxon>
        <taxon>Archaeoglobi</taxon>
        <taxon>Archaeoglobales</taxon>
        <taxon>Archaeoglobaceae</taxon>
        <taxon>Archaeoglobus</taxon>
    </lineage>
</organism>
<keyword id="KW-0066">ATP synthesis</keyword>
<keyword id="KW-1003">Cell membrane</keyword>
<keyword id="KW-0375">Hydrogen ion transport</keyword>
<keyword id="KW-0406">Ion transport</keyword>
<keyword id="KW-0472">Membrane</keyword>
<keyword id="KW-1185">Reference proteome</keyword>
<keyword id="KW-0813">Transport</keyword>
<evidence type="ECO:0000255" key="1">
    <source>
        <dbReference type="HAMAP-Rule" id="MF_00314"/>
    </source>
</evidence>
<dbReference type="EMBL" id="AE000782">
    <property type="protein sequence ID" value="AAB90075.1"/>
    <property type="molecule type" value="Genomic_DNA"/>
</dbReference>
<dbReference type="PIR" id="C69395">
    <property type="entry name" value="C69395"/>
</dbReference>
<dbReference type="SMR" id="O29103"/>
<dbReference type="STRING" id="224325.AF_1164"/>
<dbReference type="PaxDb" id="224325-AF_1164"/>
<dbReference type="EnsemblBacteria" id="AAB90075">
    <property type="protein sequence ID" value="AAB90075"/>
    <property type="gene ID" value="AF_1164"/>
</dbReference>
<dbReference type="KEGG" id="afu:AF_1164"/>
<dbReference type="eggNOG" id="arCOG02459">
    <property type="taxonomic scope" value="Archaea"/>
</dbReference>
<dbReference type="HOGENOM" id="CLU_059311_0_1_2"/>
<dbReference type="OrthoDB" id="4272at2157"/>
<dbReference type="PhylomeDB" id="O29103"/>
<dbReference type="Proteomes" id="UP000002199">
    <property type="component" value="Chromosome"/>
</dbReference>
<dbReference type="GO" id="GO:0005886">
    <property type="term" value="C:plasma membrane"/>
    <property type="evidence" value="ECO:0007669"/>
    <property type="project" value="UniProtKB-SubCell"/>
</dbReference>
<dbReference type="GO" id="GO:0033179">
    <property type="term" value="C:proton-transporting V-type ATPase, V0 domain"/>
    <property type="evidence" value="ECO:0007669"/>
    <property type="project" value="InterPro"/>
</dbReference>
<dbReference type="GO" id="GO:0005524">
    <property type="term" value="F:ATP binding"/>
    <property type="evidence" value="ECO:0007669"/>
    <property type="project" value="UniProtKB-UniRule"/>
</dbReference>
<dbReference type="GO" id="GO:0046933">
    <property type="term" value="F:proton-transporting ATP synthase activity, rotational mechanism"/>
    <property type="evidence" value="ECO:0007669"/>
    <property type="project" value="UniProtKB-UniRule"/>
</dbReference>
<dbReference type="GO" id="GO:0046961">
    <property type="term" value="F:proton-transporting ATPase activity, rotational mechanism"/>
    <property type="evidence" value="ECO:0007669"/>
    <property type="project" value="InterPro"/>
</dbReference>
<dbReference type="GO" id="GO:0042777">
    <property type="term" value="P:proton motive force-driven plasma membrane ATP synthesis"/>
    <property type="evidence" value="ECO:0007669"/>
    <property type="project" value="UniProtKB-UniRule"/>
</dbReference>
<dbReference type="Gene3D" id="1.10.132.50">
    <property type="entry name" value="ATP synthase (C/AC39) subunit, domain 3"/>
    <property type="match status" value="1"/>
</dbReference>
<dbReference type="Gene3D" id="1.20.1690.10">
    <property type="entry name" value="V-type ATP synthase subunit C domain"/>
    <property type="match status" value="2"/>
</dbReference>
<dbReference type="HAMAP" id="MF_00314">
    <property type="entry name" value="ATP_synth_C_arch"/>
    <property type="match status" value="1"/>
</dbReference>
<dbReference type="InterPro" id="IPR036079">
    <property type="entry name" value="ATPase_csu/dsu_sf"/>
</dbReference>
<dbReference type="InterPro" id="IPR014272">
    <property type="entry name" value="ATPase_V0-cplx_csu"/>
</dbReference>
<dbReference type="InterPro" id="IPR002843">
    <property type="entry name" value="ATPase_V0-cplx_csu/dsu"/>
</dbReference>
<dbReference type="InterPro" id="IPR050873">
    <property type="entry name" value="V-ATPase_V0D/AC39_subunit"/>
</dbReference>
<dbReference type="InterPro" id="IPR035067">
    <property type="entry name" value="V-type_ATPase_csu/dsu"/>
</dbReference>
<dbReference type="InterPro" id="IPR044911">
    <property type="entry name" value="V-type_ATPase_csu/dsu_dom_3"/>
</dbReference>
<dbReference type="NCBIfam" id="TIGR02923">
    <property type="entry name" value="AhaC"/>
    <property type="match status" value="1"/>
</dbReference>
<dbReference type="NCBIfam" id="NF002268">
    <property type="entry name" value="PRK01198.1-4"/>
    <property type="match status" value="1"/>
</dbReference>
<dbReference type="PANTHER" id="PTHR38682">
    <property type="entry name" value="V-TYPE ATP SYNTHASE SUBUNIT C"/>
    <property type="match status" value="1"/>
</dbReference>
<dbReference type="PANTHER" id="PTHR38682:SF1">
    <property type="entry name" value="V-TYPE ATP SYNTHASE SUBUNIT C"/>
    <property type="match status" value="1"/>
</dbReference>
<dbReference type="Pfam" id="PF01992">
    <property type="entry name" value="vATP-synt_AC39"/>
    <property type="match status" value="1"/>
</dbReference>
<dbReference type="SUPFAM" id="SSF103486">
    <property type="entry name" value="V-type ATP synthase subunit C"/>
    <property type="match status" value="1"/>
</dbReference>
<gene>
    <name evidence="1" type="primary">atpC</name>
    <name type="ordered locus">AF_1164</name>
</gene>
<comment type="function">
    <text evidence="1">Component of the A-type ATP synthase that produces ATP from ADP in the presence of a proton gradient across the membrane.</text>
</comment>
<comment type="subunit">
    <text evidence="1">Has multiple subunits with at least A(3), B(3), C, D, E, F, H, I and proteolipid K(x).</text>
</comment>
<comment type="subcellular location">
    <subcellularLocation>
        <location evidence="1">Cell membrane</location>
        <topology evidence="1">Peripheral membrane protein</topology>
    </subcellularLocation>
</comment>
<comment type="similarity">
    <text evidence="1">Belongs to the V-ATPase V0D/AC39 subunit family.</text>
</comment>
<reference key="1">
    <citation type="journal article" date="1997" name="Nature">
        <title>The complete genome sequence of the hyperthermophilic, sulphate-reducing archaeon Archaeoglobus fulgidus.</title>
        <authorList>
            <person name="Klenk H.-P."/>
            <person name="Clayton R.A."/>
            <person name="Tomb J.-F."/>
            <person name="White O."/>
            <person name="Nelson K.E."/>
            <person name="Ketchum K.A."/>
            <person name="Dodson R.J."/>
            <person name="Gwinn M.L."/>
            <person name="Hickey E.K."/>
            <person name="Peterson J.D."/>
            <person name="Richardson D.L."/>
            <person name="Kerlavage A.R."/>
            <person name="Graham D.E."/>
            <person name="Kyrpides N.C."/>
            <person name="Fleischmann R.D."/>
            <person name="Quackenbush J."/>
            <person name="Lee N.H."/>
            <person name="Sutton G.G."/>
            <person name="Gill S.R."/>
            <person name="Kirkness E.F."/>
            <person name="Dougherty B.A."/>
            <person name="McKenney K."/>
            <person name="Adams M.D."/>
            <person name="Loftus B.J."/>
            <person name="Peterson S.N."/>
            <person name="Reich C.I."/>
            <person name="McNeil L.K."/>
            <person name="Badger J.H."/>
            <person name="Glodek A."/>
            <person name="Zhou L."/>
            <person name="Overbeek R."/>
            <person name="Gocayne J.D."/>
            <person name="Weidman J.F."/>
            <person name="McDonald L.A."/>
            <person name="Utterback T.R."/>
            <person name="Cotton M.D."/>
            <person name="Spriggs T."/>
            <person name="Artiach P."/>
            <person name="Kaine B.P."/>
            <person name="Sykes S.M."/>
            <person name="Sadow P.W."/>
            <person name="D'Andrea K.P."/>
            <person name="Bowman C."/>
            <person name="Fujii C."/>
            <person name="Garland S.A."/>
            <person name="Mason T.M."/>
            <person name="Olsen G.J."/>
            <person name="Fraser C.M."/>
            <person name="Smith H.O."/>
            <person name="Woese C.R."/>
            <person name="Venter J.C."/>
        </authorList>
    </citation>
    <scope>NUCLEOTIDE SEQUENCE [LARGE SCALE GENOMIC DNA]</scope>
    <source>
        <strain>ATCC 49558 / DSM 4304 / JCM 9628 / NBRC 100126 / VC-16</strain>
    </source>
</reference>
<feature type="chain" id="PRO_0000119361" description="A-type ATP synthase subunit C">
    <location>
        <begin position="1"/>
        <end position="342"/>
    </location>
</feature>